<organism>
    <name type="scientific">Ehrlichia ruminantium (strain Welgevonden)</name>
    <dbReference type="NCBI Taxonomy" id="254945"/>
    <lineage>
        <taxon>Bacteria</taxon>
        <taxon>Pseudomonadati</taxon>
        <taxon>Pseudomonadota</taxon>
        <taxon>Alphaproteobacteria</taxon>
        <taxon>Rickettsiales</taxon>
        <taxon>Anaplasmataceae</taxon>
        <taxon>Ehrlichia</taxon>
    </lineage>
</organism>
<reference key="1">
    <citation type="journal article" date="2005" name="Proc. Natl. Acad. Sci. U.S.A.">
        <title>The genome of the heartwater agent Ehrlichia ruminantium contains multiple tandem repeats of actively variable copy number.</title>
        <authorList>
            <person name="Collins N.E."/>
            <person name="Liebenberg J."/>
            <person name="de Villiers E.P."/>
            <person name="Brayton K.A."/>
            <person name="Louw E."/>
            <person name="Pretorius A."/>
            <person name="Faber F.E."/>
            <person name="van Heerden H."/>
            <person name="Josemans A."/>
            <person name="van Kleef M."/>
            <person name="Steyn H.C."/>
            <person name="van Strijp M.F."/>
            <person name="Zweygarth E."/>
            <person name="Jongejan F."/>
            <person name="Maillard J.C."/>
            <person name="Berthier D."/>
            <person name="Botha M."/>
            <person name="Joubert F."/>
            <person name="Corton C.H."/>
            <person name="Thomson N.R."/>
            <person name="Allsopp M.T."/>
            <person name="Allsopp B.A."/>
        </authorList>
    </citation>
    <scope>NUCLEOTIDE SEQUENCE [LARGE SCALE GENOMIC DNA]</scope>
    <source>
        <strain>Welgevonden</strain>
    </source>
</reference>
<reference key="2">
    <citation type="journal article" date="2006" name="J. Bacteriol.">
        <title>Comparative genomic analysis of three strains of Ehrlichia ruminantium reveals an active process of genome size plasticity.</title>
        <authorList>
            <person name="Frutos R."/>
            <person name="Viari A."/>
            <person name="Ferraz C."/>
            <person name="Morgat A."/>
            <person name="Eychenie S."/>
            <person name="Kandassamy Y."/>
            <person name="Chantal I."/>
            <person name="Bensaid A."/>
            <person name="Coissac E."/>
            <person name="Vachiery N."/>
            <person name="Demaille J."/>
            <person name="Martinez D."/>
        </authorList>
    </citation>
    <scope>NUCLEOTIDE SEQUENCE [LARGE SCALE GENOMIC DNA]</scope>
    <source>
        <strain>Welgevonden</strain>
    </source>
</reference>
<name>RL18_EHRRW</name>
<evidence type="ECO:0000255" key="1">
    <source>
        <dbReference type="HAMAP-Rule" id="MF_01337"/>
    </source>
</evidence>
<evidence type="ECO:0000305" key="2"/>
<feature type="chain" id="PRO_0000131262" description="Large ribosomal subunit protein uL18">
    <location>
        <begin position="1"/>
        <end position="120"/>
    </location>
</feature>
<proteinExistence type="inferred from homology"/>
<gene>
    <name evidence="1" type="primary">rplR</name>
    <name type="ordered locus">Erum5920</name>
    <name type="ordered locus">ERWE_CDS_06220</name>
</gene>
<sequence>MLATSNRFERRKRRVRLKLKNNLSLLRLSIFKSNRHFYVQLIDDSCGKTYAAASTLEREVIALAHRRVNSNSVKIVAKLMSERLNKLDNCKKFVFDRGPYKYIGVVAEFANELRSYGFEF</sequence>
<protein>
    <recommendedName>
        <fullName evidence="1">Large ribosomal subunit protein uL18</fullName>
    </recommendedName>
    <alternativeName>
        <fullName evidence="2">50S ribosomal protein L18</fullName>
    </alternativeName>
</protein>
<keyword id="KW-0687">Ribonucleoprotein</keyword>
<keyword id="KW-0689">Ribosomal protein</keyword>
<keyword id="KW-0694">RNA-binding</keyword>
<keyword id="KW-0699">rRNA-binding</keyword>
<dbReference type="EMBL" id="CR767821">
    <property type="protein sequence ID" value="CAH58323.1"/>
    <property type="molecule type" value="Genomic_DNA"/>
</dbReference>
<dbReference type="EMBL" id="CR925678">
    <property type="protein sequence ID" value="CAI27116.1"/>
    <property type="molecule type" value="Genomic_DNA"/>
</dbReference>
<dbReference type="RefSeq" id="WP_011155273.1">
    <property type="nucleotide sequence ID" value="NC_005295.2"/>
</dbReference>
<dbReference type="SMR" id="Q5HAT8"/>
<dbReference type="GeneID" id="33058414"/>
<dbReference type="KEGG" id="eru:Erum5920"/>
<dbReference type="KEGG" id="erw:ERWE_CDS_06220"/>
<dbReference type="eggNOG" id="COG0256">
    <property type="taxonomic scope" value="Bacteria"/>
</dbReference>
<dbReference type="HOGENOM" id="CLU_098841_0_1_5"/>
<dbReference type="Proteomes" id="UP000001021">
    <property type="component" value="Chromosome"/>
</dbReference>
<dbReference type="GO" id="GO:0022625">
    <property type="term" value="C:cytosolic large ribosomal subunit"/>
    <property type="evidence" value="ECO:0007669"/>
    <property type="project" value="TreeGrafter"/>
</dbReference>
<dbReference type="GO" id="GO:0008097">
    <property type="term" value="F:5S rRNA binding"/>
    <property type="evidence" value="ECO:0007669"/>
    <property type="project" value="TreeGrafter"/>
</dbReference>
<dbReference type="GO" id="GO:0003735">
    <property type="term" value="F:structural constituent of ribosome"/>
    <property type="evidence" value="ECO:0007669"/>
    <property type="project" value="InterPro"/>
</dbReference>
<dbReference type="GO" id="GO:0006412">
    <property type="term" value="P:translation"/>
    <property type="evidence" value="ECO:0007669"/>
    <property type="project" value="UniProtKB-UniRule"/>
</dbReference>
<dbReference type="CDD" id="cd00432">
    <property type="entry name" value="Ribosomal_L18_L5e"/>
    <property type="match status" value="1"/>
</dbReference>
<dbReference type="Gene3D" id="3.30.420.100">
    <property type="match status" value="1"/>
</dbReference>
<dbReference type="HAMAP" id="MF_01337_B">
    <property type="entry name" value="Ribosomal_uL18_B"/>
    <property type="match status" value="1"/>
</dbReference>
<dbReference type="InterPro" id="IPR004389">
    <property type="entry name" value="Ribosomal_uL18_bac-type"/>
</dbReference>
<dbReference type="InterPro" id="IPR005484">
    <property type="entry name" value="Ribosomal_uL18_bac/euk"/>
</dbReference>
<dbReference type="PANTHER" id="PTHR12899">
    <property type="entry name" value="39S RIBOSOMAL PROTEIN L18, MITOCHONDRIAL"/>
    <property type="match status" value="1"/>
</dbReference>
<dbReference type="PANTHER" id="PTHR12899:SF3">
    <property type="entry name" value="LARGE RIBOSOMAL SUBUNIT PROTEIN UL18M"/>
    <property type="match status" value="1"/>
</dbReference>
<dbReference type="Pfam" id="PF00861">
    <property type="entry name" value="Ribosomal_L18p"/>
    <property type="match status" value="1"/>
</dbReference>
<dbReference type="SUPFAM" id="SSF53137">
    <property type="entry name" value="Translational machinery components"/>
    <property type="match status" value="1"/>
</dbReference>
<comment type="function">
    <text evidence="1">This is one of the proteins that bind and probably mediate the attachment of the 5S RNA into the large ribosomal subunit, where it forms part of the central protuberance.</text>
</comment>
<comment type="subunit">
    <text evidence="1">Part of the 50S ribosomal subunit; part of the 5S rRNA/L5/L18/L25 subcomplex. Contacts the 5S and 23S rRNAs.</text>
</comment>
<comment type="similarity">
    <text evidence="1">Belongs to the universal ribosomal protein uL18 family.</text>
</comment>
<accession>Q5HAT8</accession>
<accession>Q5FD74</accession>